<accession>B8I5V9</accession>
<organism>
    <name type="scientific">Ruminiclostridium cellulolyticum (strain ATCC 35319 / DSM 5812 / JCM 6584 / H10)</name>
    <name type="common">Clostridium cellulolyticum</name>
    <dbReference type="NCBI Taxonomy" id="394503"/>
    <lineage>
        <taxon>Bacteria</taxon>
        <taxon>Bacillati</taxon>
        <taxon>Bacillota</taxon>
        <taxon>Clostridia</taxon>
        <taxon>Eubacteriales</taxon>
        <taxon>Oscillospiraceae</taxon>
        <taxon>Ruminiclostridium</taxon>
    </lineage>
</organism>
<proteinExistence type="inferred from homology"/>
<gene>
    <name evidence="1" type="primary">groES</name>
    <name evidence="1" type="synonym">groS</name>
    <name type="ordered locus">Ccel_0391</name>
</gene>
<evidence type="ECO:0000255" key="1">
    <source>
        <dbReference type="HAMAP-Rule" id="MF_00580"/>
    </source>
</evidence>
<dbReference type="EMBL" id="CP001348">
    <property type="protein sequence ID" value="ACL74776.1"/>
    <property type="molecule type" value="Genomic_DNA"/>
</dbReference>
<dbReference type="RefSeq" id="WP_012634839.1">
    <property type="nucleotide sequence ID" value="NC_011898.1"/>
</dbReference>
<dbReference type="SMR" id="B8I5V9"/>
<dbReference type="STRING" id="394503.Ccel_0391"/>
<dbReference type="KEGG" id="cce:Ccel_0391"/>
<dbReference type="eggNOG" id="COG0234">
    <property type="taxonomic scope" value="Bacteria"/>
</dbReference>
<dbReference type="HOGENOM" id="CLU_132825_2_0_9"/>
<dbReference type="OrthoDB" id="9806791at2"/>
<dbReference type="Proteomes" id="UP000001349">
    <property type="component" value="Chromosome"/>
</dbReference>
<dbReference type="GO" id="GO:0005737">
    <property type="term" value="C:cytoplasm"/>
    <property type="evidence" value="ECO:0007669"/>
    <property type="project" value="UniProtKB-SubCell"/>
</dbReference>
<dbReference type="GO" id="GO:0005524">
    <property type="term" value="F:ATP binding"/>
    <property type="evidence" value="ECO:0007669"/>
    <property type="project" value="InterPro"/>
</dbReference>
<dbReference type="GO" id="GO:0046872">
    <property type="term" value="F:metal ion binding"/>
    <property type="evidence" value="ECO:0007669"/>
    <property type="project" value="TreeGrafter"/>
</dbReference>
<dbReference type="GO" id="GO:0044183">
    <property type="term" value="F:protein folding chaperone"/>
    <property type="evidence" value="ECO:0007669"/>
    <property type="project" value="InterPro"/>
</dbReference>
<dbReference type="GO" id="GO:0051087">
    <property type="term" value="F:protein-folding chaperone binding"/>
    <property type="evidence" value="ECO:0007669"/>
    <property type="project" value="TreeGrafter"/>
</dbReference>
<dbReference type="GO" id="GO:0051082">
    <property type="term" value="F:unfolded protein binding"/>
    <property type="evidence" value="ECO:0007669"/>
    <property type="project" value="TreeGrafter"/>
</dbReference>
<dbReference type="GO" id="GO:0051085">
    <property type="term" value="P:chaperone cofactor-dependent protein refolding"/>
    <property type="evidence" value="ECO:0007669"/>
    <property type="project" value="TreeGrafter"/>
</dbReference>
<dbReference type="CDD" id="cd00320">
    <property type="entry name" value="cpn10"/>
    <property type="match status" value="1"/>
</dbReference>
<dbReference type="FunFam" id="2.30.33.40:FF:000001">
    <property type="entry name" value="10 kDa chaperonin"/>
    <property type="match status" value="1"/>
</dbReference>
<dbReference type="Gene3D" id="2.30.33.40">
    <property type="entry name" value="GroES chaperonin"/>
    <property type="match status" value="1"/>
</dbReference>
<dbReference type="HAMAP" id="MF_00580">
    <property type="entry name" value="CH10"/>
    <property type="match status" value="1"/>
</dbReference>
<dbReference type="InterPro" id="IPR020818">
    <property type="entry name" value="Chaperonin_GroES"/>
</dbReference>
<dbReference type="InterPro" id="IPR037124">
    <property type="entry name" value="Chaperonin_GroES_sf"/>
</dbReference>
<dbReference type="InterPro" id="IPR018369">
    <property type="entry name" value="Chaprnonin_Cpn10_CS"/>
</dbReference>
<dbReference type="InterPro" id="IPR011032">
    <property type="entry name" value="GroES-like_sf"/>
</dbReference>
<dbReference type="NCBIfam" id="NF001531">
    <property type="entry name" value="PRK00364.2-2"/>
    <property type="match status" value="1"/>
</dbReference>
<dbReference type="NCBIfam" id="NF001533">
    <property type="entry name" value="PRK00364.2-4"/>
    <property type="match status" value="1"/>
</dbReference>
<dbReference type="NCBIfam" id="NF001534">
    <property type="entry name" value="PRK00364.2-5"/>
    <property type="match status" value="1"/>
</dbReference>
<dbReference type="PANTHER" id="PTHR10772">
    <property type="entry name" value="10 KDA HEAT SHOCK PROTEIN"/>
    <property type="match status" value="1"/>
</dbReference>
<dbReference type="PANTHER" id="PTHR10772:SF58">
    <property type="entry name" value="CO-CHAPERONIN GROES"/>
    <property type="match status" value="1"/>
</dbReference>
<dbReference type="Pfam" id="PF00166">
    <property type="entry name" value="Cpn10"/>
    <property type="match status" value="1"/>
</dbReference>
<dbReference type="PRINTS" id="PR00297">
    <property type="entry name" value="CHAPERONIN10"/>
</dbReference>
<dbReference type="SMART" id="SM00883">
    <property type="entry name" value="Cpn10"/>
    <property type="match status" value="1"/>
</dbReference>
<dbReference type="SUPFAM" id="SSF50129">
    <property type="entry name" value="GroES-like"/>
    <property type="match status" value="1"/>
</dbReference>
<dbReference type="PROSITE" id="PS00681">
    <property type="entry name" value="CHAPERONINS_CPN10"/>
    <property type="match status" value="1"/>
</dbReference>
<name>CH10_RUMCH</name>
<feature type="chain" id="PRO_1000146896" description="Co-chaperonin GroES">
    <location>
        <begin position="1"/>
        <end position="94"/>
    </location>
</feature>
<sequence>MKIKPLGDRVVIKMLESEETTKSGIVLPGSAKEKPQVAEIVAVGPGTVVDGKEVKMEVKVGDRVLTSKYSGTEVKFDGQEYTILKQGDILAIVE</sequence>
<protein>
    <recommendedName>
        <fullName evidence="1">Co-chaperonin GroES</fullName>
    </recommendedName>
    <alternativeName>
        <fullName evidence="1">10 kDa chaperonin</fullName>
    </alternativeName>
    <alternativeName>
        <fullName evidence="1">Chaperonin-10</fullName>
        <shortName evidence="1">Cpn10</shortName>
    </alternativeName>
</protein>
<comment type="function">
    <text evidence="1">Together with the chaperonin GroEL, plays an essential role in assisting protein folding. The GroEL-GroES system forms a nano-cage that allows encapsulation of the non-native substrate proteins and provides a physical environment optimized to promote and accelerate protein folding. GroES binds to the apical surface of the GroEL ring, thereby capping the opening of the GroEL channel.</text>
</comment>
<comment type="subunit">
    <text evidence="1">Heptamer of 7 subunits arranged in a ring. Interacts with the chaperonin GroEL.</text>
</comment>
<comment type="subcellular location">
    <subcellularLocation>
        <location evidence="1">Cytoplasm</location>
    </subcellularLocation>
</comment>
<comment type="similarity">
    <text evidence="1">Belongs to the GroES chaperonin family.</text>
</comment>
<reference key="1">
    <citation type="submission" date="2009-01" db="EMBL/GenBank/DDBJ databases">
        <title>Complete sequence of Clostridium cellulolyticum H10.</title>
        <authorList>
            <consortium name="US DOE Joint Genome Institute"/>
            <person name="Lucas S."/>
            <person name="Copeland A."/>
            <person name="Lapidus A."/>
            <person name="Glavina del Rio T."/>
            <person name="Dalin E."/>
            <person name="Tice H."/>
            <person name="Bruce D."/>
            <person name="Goodwin L."/>
            <person name="Pitluck S."/>
            <person name="Chertkov O."/>
            <person name="Saunders E."/>
            <person name="Brettin T."/>
            <person name="Detter J.C."/>
            <person name="Han C."/>
            <person name="Larimer F."/>
            <person name="Land M."/>
            <person name="Hauser L."/>
            <person name="Kyrpides N."/>
            <person name="Ivanova N."/>
            <person name="Zhou J."/>
            <person name="Richardson P."/>
        </authorList>
    </citation>
    <scope>NUCLEOTIDE SEQUENCE [LARGE SCALE GENOMIC DNA]</scope>
    <source>
        <strain>ATCC 35319 / DSM 5812 / JCM 6584 / H10</strain>
    </source>
</reference>
<keyword id="KW-0143">Chaperone</keyword>
<keyword id="KW-0963">Cytoplasm</keyword>
<keyword id="KW-1185">Reference proteome</keyword>